<organism>
    <name type="scientific">Bordetella avium (strain 197N)</name>
    <dbReference type="NCBI Taxonomy" id="360910"/>
    <lineage>
        <taxon>Bacteria</taxon>
        <taxon>Pseudomonadati</taxon>
        <taxon>Pseudomonadota</taxon>
        <taxon>Betaproteobacteria</taxon>
        <taxon>Burkholderiales</taxon>
        <taxon>Alcaligenaceae</taxon>
        <taxon>Bordetella</taxon>
    </lineage>
</organism>
<proteinExistence type="inferred from homology"/>
<keyword id="KW-0067">ATP-binding</keyword>
<keyword id="KW-0460">Magnesium</keyword>
<keyword id="KW-0464">Manganese</keyword>
<keyword id="KW-0479">Metal-binding</keyword>
<keyword id="KW-0547">Nucleotide-binding</keyword>
<keyword id="KW-0548">Nucleotidyltransferase</keyword>
<keyword id="KW-1185">Reference proteome</keyword>
<keyword id="KW-0808">Transferase</keyword>
<gene>
    <name evidence="1" type="primary">ydiU</name>
    <name evidence="1" type="synonym">selO</name>
    <name type="ordered locus">BAV2277</name>
</gene>
<comment type="function">
    <text evidence="1">Nucleotidyltransferase involved in the post-translational modification of proteins. It can catalyze the addition of adenosine monophosphate (AMP) or uridine monophosphate (UMP) to a protein, resulting in modifications known as AMPylation and UMPylation.</text>
</comment>
<comment type="catalytic activity">
    <reaction evidence="1">
        <text>L-seryl-[protein] + ATP = 3-O-(5'-adenylyl)-L-seryl-[protein] + diphosphate</text>
        <dbReference type="Rhea" id="RHEA:58120"/>
        <dbReference type="Rhea" id="RHEA-COMP:9863"/>
        <dbReference type="Rhea" id="RHEA-COMP:15073"/>
        <dbReference type="ChEBI" id="CHEBI:29999"/>
        <dbReference type="ChEBI" id="CHEBI:30616"/>
        <dbReference type="ChEBI" id="CHEBI:33019"/>
        <dbReference type="ChEBI" id="CHEBI:142516"/>
        <dbReference type="EC" id="2.7.7.108"/>
    </reaction>
</comment>
<comment type="catalytic activity">
    <reaction evidence="1">
        <text>L-threonyl-[protein] + ATP = 3-O-(5'-adenylyl)-L-threonyl-[protein] + diphosphate</text>
        <dbReference type="Rhea" id="RHEA:54292"/>
        <dbReference type="Rhea" id="RHEA-COMP:11060"/>
        <dbReference type="Rhea" id="RHEA-COMP:13847"/>
        <dbReference type="ChEBI" id="CHEBI:30013"/>
        <dbReference type="ChEBI" id="CHEBI:30616"/>
        <dbReference type="ChEBI" id="CHEBI:33019"/>
        <dbReference type="ChEBI" id="CHEBI:138113"/>
        <dbReference type="EC" id="2.7.7.108"/>
    </reaction>
</comment>
<comment type="catalytic activity">
    <reaction evidence="1">
        <text>L-tyrosyl-[protein] + ATP = O-(5'-adenylyl)-L-tyrosyl-[protein] + diphosphate</text>
        <dbReference type="Rhea" id="RHEA:54288"/>
        <dbReference type="Rhea" id="RHEA-COMP:10136"/>
        <dbReference type="Rhea" id="RHEA-COMP:13846"/>
        <dbReference type="ChEBI" id="CHEBI:30616"/>
        <dbReference type="ChEBI" id="CHEBI:33019"/>
        <dbReference type="ChEBI" id="CHEBI:46858"/>
        <dbReference type="ChEBI" id="CHEBI:83624"/>
        <dbReference type="EC" id="2.7.7.108"/>
    </reaction>
</comment>
<comment type="catalytic activity">
    <reaction evidence="1">
        <text>L-histidyl-[protein] + UTP = N(tele)-(5'-uridylyl)-L-histidyl-[protein] + diphosphate</text>
        <dbReference type="Rhea" id="RHEA:83891"/>
        <dbReference type="Rhea" id="RHEA-COMP:9745"/>
        <dbReference type="Rhea" id="RHEA-COMP:20239"/>
        <dbReference type="ChEBI" id="CHEBI:29979"/>
        <dbReference type="ChEBI" id="CHEBI:33019"/>
        <dbReference type="ChEBI" id="CHEBI:46398"/>
        <dbReference type="ChEBI" id="CHEBI:233474"/>
    </reaction>
</comment>
<comment type="catalytic activity">
    <reaction evidence="1">
        <text>L-seryl-[protein] + UTP = O-(5'-uridylyl)-L-seryl-[protein] + diphosphate</text>
        <dbReference type="Rhea" id="RHEA:64604"/>
        <dbReference type="Rhea" id="RHEA-COMP:9863"/>
        <dbReference type="Rhea" id="RHEA-COMP:16635"/>
        <dbReference type="ChEBI" id="CHEBI:29999"/>
        <dbReference type="ChEBI" id="CHEBI:33019"/>
        <dbReference type="ChEBI" id="CHEBI:46398"/>
        <dbReference type="ChEBI" id="CHEBI:156051"/>
    </reaction>
</comment>
<comment type="catalytic activity">
    <reaction evidence="1">
        <text>L-tyrosyl-[protein] + UTP = O-(5'-uridylyl)-L-tyrosyl-[protein] + diphosphate</text>
        <dbReference type="Rhea" id="RHEA:83887"/>
        <dbReference type="Rhea" id="RHEA-COMP:10136"/>
        <dbReference type="Rhea" id="RHEA-COMP:20238"/>
        <dbReference type="ChEBI" id="CHEBI:33019"/>
        <dbReference type="ChEBI" id="CHEBI:46398"/>
        <dbReference type="ChEBI" id="CHEBI:46858"/>
        <dbReference type="ChEBI" id="CHEBI:90602"/>
    </reaction>
</comment>
<comment type="cofactor">
    <cofactor evidence="1">
        <name>Mg(2+)</name>
        <dbReference type="ChEBI" id="CHEBI:18420"/>
    </cofactor>
    <cofactor evidence="1">
        <name>Mn(2+)</name>
        <dbReference type="ChEBI" id="CHEBI:29035"/>
    </cofactor>
</comment>
<comment type="similarity">
    <text evidence="1">Belongs to the SELO family.</text>
</comment>
<accession>Q2KYJ8</accession>
<evidence type="ECO:0000255" key="1">
    <source>
        <dbReference type="HAMAP-Rule" id="MF_00692"/>
    </source>
</evidence>
<reference key="1">
    <citation type="journal article" date="2006" name="J. Bacteriol.">
        <title>Comparison of the genome sequence of the poultry pathogen Bordetella avium with those of B. bronchiseptica, B. pertussis, and B. parapertussis reveals extensive diversity in surface structures associated with host interaction.</title>
        <authorList>
            <person name="Sebaihia M."/>
            <person name="Preston A."/>
            <person name="Maskell D.J."/>
            <person name="Kuzmiak H."/>
            <person name="Connell T.D."/>
            <person name="King N.D."/>
            <person name="Orndorff P.E."/>
            <person name="Miyamoto D.M."/>
            <person name="Thomson N.R."/>
            <person name="Harris D."/>
            <person name="Goble A."/>
            <person name="Lord A."/>
            <person name="Murphy L."/>
            <person name="Quail M.A."/>
            <person name="Rutter S."/>
            <person name="Squares R."/>
            <person name="Squares S."/>
            <person name="Woodward J."/>
            <person name="Parkhill J."/>
            <person name="Temple L.M."/>
        </authorList>
    </citation>
    <scope>NUCLEOTIDE SEQUENCE [LARGE SCALE GENOMIC DNA]</scope>
    <source>
        <strain>197N</strain>
    </source>
</reference>
<feature type="chain" id="PRO_0000271810" description="Protein nucleotidyltransferase YdiU">
    <location>
        <begin position="1"/>
        <end position="490"/>
    </location>
</feature>
<feature type="active site" description="Proton acceptor" evidence="1">
    <location>
        <position position="256"/>
    </location>
</feature>
<feature type="binding site" evidence="1">
    <location>
        <position position="92"/>
    </location>
    <ligand>
        <name>ATP</name>
        <dbReference type="ChEBI" id="CHEBI:30616"/>
    </ligand>
</feature>
<feature type="binding site" evidence="1">
    <location>
        <position position="94"/>
    </location>
    <ligand>
        <name>ATP</name>
        <dbReference type="ChEBI" id="CHEBI:30616"/>
    </ligand>
</feature>
<feature type="binding site" evidence="1">
    <location>
        <position position="95"/>
    </location>
    <ligand>
        <name>ATP</name>
        <dbReference type="ChEBI" id="CHEBI:30616"/>
    </ligand>
</feature>
<feature type="binding site" evidence="1">
    <location>
        <position position="114"/>
    </location>
    <ligand>
        <name>ATP</name>
        <dbReference type="ChEBI" id="CHEBI:30616"/>
    </ligand>
</feature>
<feature type="binding site" evidence="1">
    <location>
        <position position="126"/>
    </location>
    <ligand>
        <name>ATP</name>
        <dbReference type="ChEBI" id="CHEBI:30616"/>
    </ligand>
</feature>
<feature type="binding site" evidence="1">
    <location>
        <position position="127"/>
    </location>
    <ligand>
        <name>ATP</name>
        <dbReference type="ChEBI" id="CHEBI:30616"/>
    </ligand>
</feature>
<feature type="binding site" evidence="1">
    <location>
        <position position="177"/>
    </location>
    <ligand>
        <name>ATP</name>
        <dbReference type="ChEBI" id="CHEBI:30616"/>
    </ligand>
</feature>
<feature type="binding site" evidence="1">
    <location>
        <position position="184"/>
    </location>
    <ligand>
        <name>ATP</name>
        <dbReference type="ChEBI" id="CHEBI:30616"/>
    </ligand>
</feature>
<feature type="binding site" evidence="1">
    <location>
        <position position="257"/>
    </location>
    <ligand>
        <name>Mg(2+)</name>
        <dbReference type="ChEBI" id="CHEBI:18420"/>
    </ligand>
</feature>
<feature type="binding site" evidence="1">
    <location>
        <position position="266"/>
    </location>
    <ligand>
        <name>ATP</name>
        <dbReference type="ChEBI" id="CHEBI:30616"/>
    </ligand>
</feature>
<feature type="binding site" evidence="1">
    <location>
        <position position="266"/>
    </location>
    <ligand>
        <name>Mg(2+)</name>
        <dbReference type="ChEBI" id="CHEBI:18420"/>
    </ligand>
</feature>
<dbReference type="EC" id="2.7.7.-" evidence="1"/>
<dbReference type="EC" id="2.7.7.108" evidence="1"/>
<dbReference type="EMBL" id="AM167904">
    <property type="protein sequence ID" value="CAJ49887.1"/>
    <property type="molecule type" value="Genomic_DNA"/>
</dbReference>
<dbReference type="RefSeq" id="WP_012417938.1">
    <property type="nucleotide sequence ID" value="NC_010645.1"/>
</dbReference>
<dbReference type="SMR" id="Q2KYJ8"/>
<dbReference type="STRING" id="360910.BAV2277"/>
<dbReference type="KEGG" id="bav:BAV2277"/>
<dbReference type="eggNOG" id="COG0397">
    <property type="taxonomic scope" value="Bacteria"/>
</dbReference>
<dbReference type="HOGENOM" id="CLU_010245_4_0_4"/>
<dbReference type="Proteomes" id="UP000001977">
    <property type="component" value="Chromosome"/>
</dbReference>
<dbReference type="GO" id="GO:0070733">
    <property type="term" value="F:AMPylase activity"/>
    <property type="evidence" value="ECO:0007669"/>
    <property type="project" value="RHEA"/>
</dbReference>
<dbReference type="GO" id="GO:0005524">
    <property type="term" value="F:ATP binding"/>
    <property type="evidence" value="ECO:0007669"/>
    <property type="project" value="UniProtKB-UniRule"/>
</dbReference>
<dbReference type="GO" id="GO:0000287">
    <property type="term" value="F:magnesium ion binding"/>
    <property type="evidence" value="ECO:0007669"/>
    <property type="project" value="UniProtKB-UniRule"/>
</dbReference>
<dbReference type="HAMAP" id="MF_00692">
    <property type="entry name" value="YdiU_SelO"/>
    <property type="match status" value="1"/>
</dbReference>
<dbReference type="InterPro" id="IPR003846">
    <property type="entry name" value="SelO"/>
</dbReference>
<dbReference type="NCBIfam" id="NF000658">
    <property type="entry name" value="PRK00029.1"/>
    <property type="match status" value="1"/>
</dbReference>
<dbReference type="PANTHER" id="PTHR32057">
    <property type="entry name" value="PROTEIN ADENYLYLTRANSFERASE SELO, MITOCHONDRIAL"/>
    <property type="match status" value="1"/>
</dbReference>
<dbReference type="PANTHER" id="PTHR32057:SF14">
    <property type="entry name" value="PROTEIN ADENYLYLTRANSFERASE SELO, MITOCHONDRIAL"/>
    <property type="match status" value="1"/>
</dbReference>
<dbReference type="Pfam" id="PF02696">
    <property type="entry name" value="SelO"/>
    <property type="match status" value="1"/>
</dbReference>
<name>SELO_BORA1</name>
<sequence length="490" mass="53786">MMLSKLDALTLDNSFAALPDTFYTRLAAQPLGRPRLLHANAEAAALIGLDPAELHTQAFLEVASGQRPLPGGDTLAAVYSGHQFGVWAGQLGDGRAHLLGEVRGPGGSWELQLKGAGLTPYSRMGDGRAVLRSSVREYLASEAMHGLGIPTTRALALVVSDDPVMRETRETAAIVTRMSPSFVRFGSFEHWSSRRDGERLRILADYVIDRFYPQCREANGEHGDVLALLREVSQRTAHLMADWQSVGFCHGVMNTDNMSILGLTLDYGPFGFMDAFQLGHVCNHSDSEGRYAWNRQPSVALWNLYRLGGSLHGLVPDADALRGVLAEYETLFTQAFHARMGAKLGLSVWQSDDEALLDDLLRLMHDSRADFTLTFRALAQAVRGQTQPFLDYFIDREAAQAWWSRLAARHACDGRAAAVRAEGMDRVNPLYVLRNHLAEQAIRAAQQGDASEIDRLLGLLRRPYDLQPGAEAYAALPPDWAAGLSVSCSS</sequence>
<protein>
    <recommendedName>
        <fullName evidence="1">Protein nucleotidyltransferase YdiU</fullName>
        <ecNumber evidence="1">2.7.7.-</ecNumber>
    </recommendedName>
    <alternativeName>
        <fullName evidence="1">Protein adenylyltransferase YdiU</fullName>
        <ecNumber evidence="1">2.7.7.108</ecNumber>
    </alternativeName>
    <alternativeName>
        <fullName evidence="1">Protein uridylyltransferase YdiU</fullName>
        <ecNumber evidence="1">2.7.7.-</ecNumber>
    </alternativeName>
</protein>